<feature type="chain" id="PRO_0000134694" description="Cobalt transport protein CbiN">
    <location>
        <begin position="1"/>
        <end position="100"/>
    </location>
</feature>
<feature type="transmembrane region" description="Helical" evidence="1">
    <location>
        <begin position="8"/>
        <end position="28"/>
    </location>
</feature>
<feature type="transmembrane region" description="Helical" evidence="1">
    <location>
        <begin position="69"/>
        <end position="89"/>
    </location>
</feature>
<name>CBIN_NOSS1</name>
<sequence>MNQSKQSLSNWLLIGGVIALAVLPLIFVRDAEFTGADSQAEKAISEVKPGYEPWFKPLFEPPSGEVESLLFSSQAALGAGIIGYAVGLYKGRSQQQRHKE</sequence>
<protein>
    <recommendedName>
        <fullName evidence="1">Cobalt transport protein CbiN</fullName>
    </recommendedName>
    <alternativeName>
        <fullName evidence="1">Energy-coupling factor transporter probable substrate-capture protein CbiN</fullName>
        <shortName evidence="1">ECF transporter S component CbiN</shortName>
    </alternativeName>
</protein>
<proteinExistence type="inferred from homology"/>
<dbReference type="EMBL" id="BA000019">
    <property type="protein sequence ID" value="BAB75643.1"/>
    <property type="molecule type" value="Genomic_DNA"/>
</dbReference>
<dbReference type="PIR" id="AI2298">
    <property type="entry name" value="AI2298"/>
</dbReference>
<dbReference type="RefSeq" id="WP_010998085.1">
    <property type="nucleotide sequence ID" value="NZ_RSCN01000045.1"/>
</dbReference>
<dbReference type="STRING" id="103690.gene:10495986"/>
<dbReference type="KEGG" id="ana:alr3944"/>
<dbReference type="eggNOG" id="COG1930">
    <property type="taxonomic scope" value="Bacteria"/>
</dbReference>
<dbReference type="OrthoDB" id="1551318at2"/>
<dbReference type="UniPathway" id="UPA00148"/>
<dbReference type="Proteomes" id="UP000002483">
    <property type="component" value="Chromosome"/>
</dbReference>
<dbReference type="GO" id="GO:0005886">
    <property type="term" value="C:plasma membrane"/>
    <property type="evidence" value="ECO:0007669"/>
    <property type="project" value="UniProtKB-SubCell"/>
</dbReference>
<dbReference type="GO" id="GO:0015087">
    <property type="term" value="F:cobalt ion transmembrane transporter activity"/>
    <property type="evidence" value="ECO:0007669"/>
    <property type="project" value="UniProtKB-UniRule"/>
</dbReference>
<dbReference type="GO" id="GO:0009236">
    <property type="term" value="P:cobalamin biosynthetic process"/>
    <property type="evidence" value="ECO:0007669"/>
    <property type="project" value="UniProtKB-UniRule"/>
</dbReference>
<dbReference type="HAMAP" id="MF_00330">
    <property type="entry name" value="CbiN"/>
    <property type="match status" value="1"/>
</dbReference>
<dbReference type="InterPro" id="IPR003705">
    <property type="entry name" value="CbiN"/>
</dbReference>
<dbReference type="NCBIfam" id="TIGR01165">
    <property type="entry name" value="cbiN"/>
    <property type="match status" value="1"/>
</dbReference>
<dbReference type="NCBIfam" id="NF002780">
    <property type="entry name" value="PRK02898.1"/>
    <property type="match status" value="1"/>
</dbReference>
<dbReference type="PANTHER" id="PTHR38662">
    <property type="entry name" value="COBALT TRANSPORT PROTEIN CBIN"/>
    <property type="match status" value="1"/>
</dbReference>
<dbReference type="PANTHER" id="PTHR38662:SF1">
    <property type="entry name" value="COBALT TRANSPORT PROTEIN CBIN"/>
    <property type="match status" value="1"/>
</dbReference>
<dbReference type="Pfam" id="PF02553">
    <property type="entry name" value="CbiN"/>
    <property type="match status" value="1"/>
</dbReference>
<accession>Q8YQ90</accession>
<evidence type="ECO:0000255" key="1">
    <source>
        <dbReference type="HAMAP-Rule" id="MF_00330"/>
    </source>
</evidence>
<organism>
    <name type="scientific">Nostoc sp. (strain PCC 7120 / SAG 25.82 / UTEX 2576)</name>
    <dbReference type="NCBI Taxonomy" id="103690"/>
    <lineage>
        <taxon>Bacteria</taxon>
        <taxon>Bacillati</taxon>
        <taxon>Cyanobacteriota</taxon>
        <taxon>Cyanophyceae</taxon>
        <taxon>Nostocales</taxon>
        <taxon>Nostocaceae</taxon>
        <taxon>Nostoc</taxon>
    </lineage>
</organism>
<keyword id="KW-0997">Cell inner membrane</keyword>
<keyword id="KW-1003">Cell membrane</keyword>
<keyword id="KW-0169">Cobalamin biosynthesis</keyword>
<keyword id="KW-0170">Cobalt</keyword>
<keyword id="KW-0171">Cobalt transport</keyword>
<keyword id="KW-0406">Ion transport</keyword>
<keyword id="KW-0472">Membrane</keyword>
<keyword id="KW-1185">Reference proteome</keyword>
<keyword id="KW-0812">Transmembrane</keyword>
<keyword id="KW-1133">Transmembrane helix</keyword>
<keyword id="KW-0813">Transport</keyword>
<gene>
    <name evidence="1" type="primary">cbiN</name>
    <name type="ordered locus">alr3944</name>
</gene>
<comment type="function">
    <text evidence="1">Part of the energy-coupling factor (ECF) transporter complex CbiMNOQ involved in cobalt import.</text>
</comment>
<comment type="pathway">
    <text evidence="1">Cofactor biosynthesis; adenosylcobalamin biosynthesis.</text>
</comment>
<comment type="subunit">
    <text evidence="1">Forms an energy-coupling factor (ECF) transporter complex composed of an ATP-binding protein (A component, CbiO), a transmembrane protein (T component, CbiQ) and 2 possible substrate-capture proteins (S components, CbiM and CbiN) of unknown stoichimetry.</text>
</comment>
<comment type="subcellular location">
    <subcellularLocation>
        <location evidence="1">Cell inner membrane</location>
        <topology evidence="1">Multi-pass membrane protein</topology>
    </subcellularLocation>
</comment>
<comment type="similarity">
    <text evidence="1">Belongs to the CbiN family.</text>
</comment>
<reference key="1">
    <citation type="journal article" date="2001" name="DNA Res.">
        <title>Complete genomic sequence of the filamentous nitrogen-fixing cyanobacterium Anabaena sp. strain PCC 7120.</title>
        <authorList>
            <person name="Kaneko T."/>
            <person name="Nakamura Y."/>
            <person name="Wolk C.P."/>
            <person name="Kuritz T."/>
            <person name="Sasamoto S."/>
            <person name="Watanabe A."/>
            <person name="Iriguchi M."/>
            <person name="Ishikawa A."/>
            <person name="Kawashima K."/>
            <person name="Kimura T."/>
            <person name="Kishida Y."/>
            <person name="Kohara M."/>
            <person name="Matsumoto M."/>
            <person name="Matsuno A."/>
            <person name="Muraki A."/>
            <person name="Nakazaki N."/>
            <person name="Shimpo S."/>
            <person name="Sugimoto M."/>
            <person name="Takazawa M."/>
            <person name="Yamada M."/>
            <person name="Yasuda M."/>
            <person name="Tabata S."/>
        </authorList>
    </citation>
    <scope>NUCLEOTIDE SEQUENCE [LARGE SCALE GENOMIC DNA]</scope>
    <source>
        <strain>PCC 7120 / SAG 25.82 / UTEX 2576</strain>
    </source>
</reference>